<dbReference type="EC" id="7.1.1.-" evidence="1"/>
<dbReference type="EMBL" id="AE000657">
    <property type="protein sequence ID" value="AAC07351.1"/>
    <property type="molecule type" value="Genomic_DNA"/>
</dbReference>
<dbReference type="PIR" id="A70420">
    <property type="entry name" value="A70420"/>
</dbReference>
<dbReference type="RefSeq" id="NP_213952.1">
    <property type="nucleotide sequence ID" value="NC_000918.1"/>
</dbReference>
<dbReference type="RefSeq" id="WP_010880890.1">
    <property type="nucleotide sequence ID" value="NC_000918.1"/>
</dbReference>
<dbReference type="SMR" id="O67388"/>
<dbReference type="FunCoup" id="O67388">
    <property type="interactions" value="224"/>
</dbReference>
<dbReference type="STRING" id="224324.aq_1378"/>
<dbReference type="EnsemblBacteria" id="AAC07351">
    <property type="protein sequence ID" value="AAC07351"/>
    <property type="gene ID" value="aq_1378"/>
</dbReference>
<dbReference type="KEGG" id="aae:aq_1378"/>
<dbReference type="PATRIC" id="fig|224324.8.peg.1079"/>
<dbReference type="eggNOG" id="COG0713">
    <property type="taxonomic scope" value="Bacteria"/>
</dbReference>
<dbReference type="HOGENOM" id="CLU_144724_1_1_0"/>
<dbReference type="InParanoid" id="O67388"/>
<dbReference type="OrthoDB" id="15313at2"/>
<dbReference type="Proteomes" id="UP000000798">
    <property type="component" value="Chromosome"/>
</dbReference>
<dbReference type="GO" id="GO:0030964">
    <property type="term" value="C:NADH dehydrogenase complex"/>
    <property type="evidence" value="ECO:0000318"/>
    <property type="project" value="GO_Central"/>
</dbReference>
<dbReference type="GO" id="GO:0005886">
    <property type="term" value="C:plasma membrane"/>
    <property type="evidence" value="ECO:0007669"/>
    <property type="project" value="UniProtKB-SubCell"/>
</dbReference>
<dbReference type="GO" id="GO:0050136">
    <property type="term" value="F:NADH:ubiquinone reductase (non-electrogenic) activity"/>
    <property type="evidence" value="ECO:0007669"/>
    <property type="project" value="UniProtKB-UniRule"/>
</dbReference>
<dbReference type="GO" id="GO:0048038">
    <property type="term" value="F:quinone binding"/>
    <property type="evidence" value="ECO:0007669"/>
    <property type="project" value="UniProtKB-KW"/>
</dbReference>
<dbReference type="GO" id="GO:0042773">
    <property type="term" value="P:ATP synthesis coupled electron transport"/>
    <property type="evidence" value="ECO:0007669"/>
    <property type="project" value="InterPro"/>
</dbReference>
<dbReference type="FunFam" id="1.10.287.3510:FF:000001">
    <property type="entry name" value="NADH-quinone oxidoreductase subunit K"/>
    <property type="match status" value="1"/>
</dbReference>
<dbReference type="Gene3D" id="1.10.287.3510">
    <property type="match status" value="1"/>
</dbReference>
<dbReference type="HAMAP" id="MF_01456">
    <property type="entry name" value="NDH1_NuoK"/>
    <property type="match status" value="1"/>
</dbReference>
<dbReference type="InterPro" id="IPR001133">
    <property type="entry name" value="NADH_UbQ_OxRdtase_chain4L/K"/>
</dbReference>
<dbReference type="InterPro" id="IPR039428">
    <property type="entry name" value="NUOK/Mnh_C1-like"/>
</dbReference>
<dbReference type="NCBIfam" id="NF004320">
    <property type="entry name" value="PRK05715.1-2"/>
    <property type="match status" value="1"/>
</dbReference>
<dbReference type="PANTHER" id="PTHR11434:SF16">
    <property type="entry name" value="NADH-UBIQUINONE OXIDOREDUCTASE CHAIN 4L"/>
    <property type="match status" value="1"/>
</dbReference>
<dbReference type="PANTHER" id="PTHR11434">
    <property type="entry name" value="NADH-UBIQUINONE OXIDOREDUCTASE SUBUNIT ND4L"/>
    <property type="match status" value="1"/>
</dbReference>
<dbReference type="Pfam" id="PF00420">
    <property type="entry name" value="Oxidored_q2"/>
    <property type="match status" value="1"/>
</dbReference>
<accession>O67388</accession>
<protein>
    <recommendedName>
        <fullName evidence="1">NADH-quinone oxidoreductase subunit K 2</fullName>
        <ecNumber evidence="1">7.1.1.-</ecNumber>
    </recommendedName>
    <alternativeName>
        <fullName evidence="1">NADH dehydrogenase I subunit K 2</fullName>
    </alternativeName>
    <alternativeName>
        <fullName evidence="1">NDH-1 subunit K 2</fullName>
    </alternativeName>
</protein>
<reference key="1">
    <citation type="journal article" date="1998" name="Nature">
        <title>The complete genome of the hyperthermophilic bacterium Aquifex aeolicus.</title>
        <authorList>
            <person name="Deckert G."/>
            <person name="Warren P.V."/>
            <person name="Gaasterland T."/>
            <person name="Young W.G."/>
            <person name="Lenox A.L."/>
            <person name="Graham D.E."/>
            <person name="Overbeek R."/>
            <person name="Snead M.A."/>
            <person name="Keller M."/>
            <person name="Aujay M."/>
            <person name="Huber R."/>
            <person name="Feldman R.A."/>
            <person name="Short J.M."/>
            <person name="Olsen G.J."/>
            <person name="Swanson R.V."/>
        </authorList>
    </citation>
    <scope>NUCLEOTIDE SEQUENCE [LARGE SCALE GENOMIC DNA]</scope>
    <source>
        <strain>VF5</strain>
    </source>
</reference>
<proteinExistence type="inferred from homology"/>
<comment type="function">
    <text evidence="1">NDH-1 shuttles electrons from NADH, via FMN and iron-sulfur (Fe-S) centers, to quinones in the respiratory chain. The immediate electron acceptor for the enzyme in this species is believed to be ubiquinone. Couples the redox reaction to proton translocation (for every two electrons transferred, four hydrogen ions are translocated across the cytoplasmic membrane), and thus conserves the redox energy in a proton gradient.</text>
</comment>
<comment type="catalytic activity">
    <reaction evidence="1">
        <text>a quinone + NADH + 5 H(+)(in) = a quinol + NAD(+) + 4 H(+)(out)</text>
        <dbReference type="Rhea" id="RHEA:57888"/>
        <dbReference type="ChEBI" id="CHEBI:15378"/>
        <dbReference type="ChEBI" id="CHEBI:24646"/>
        <dbReference type="ChEBI" id="CHEBI:57540"/>
        <dbReference type="ChEBI" id="CHEBI:57945"/>
        <dbReference type="ChEBI" id="CHEBI:132124"/>
    </reaction>
</comment>
<comment type="subunit">
    <text evidence="1">NDH-1 is composed of 14 different subunits. Subunits NuoA, H, J, K, L, M, N constitute the membrane sector of the complex.</text>
</comment>
<comment type="subcellular location">
    <subcellularLocation>
        <location evidence="1">Cell inner membrane</location>
        <topology evidence="1">Multi-pass membrane protein</topology>
    </subcellularLocation>
</comment>
<comment type="similarity">
    <text evidence="1">Belongs to the complex I subunit 4L family.</text>
</comment>
<feature type="chain" id="PRO_0000389931" description="NADH-quinone oxidoreductase subunit K 2">
    <location>
        <begin position="1"/>
        <end position="102"/>
    </location>
</feature>
<feature type="transmembrane region" description="Helical" evidence="1">
    <location>
        <begin position="6"/>
        <end position="26"/>
    </location>
</feature>
<feature type="transmembrane region" description="Helical" evidence="1">
    <location>
        <begin position="30"/>
        <end position="50"/>
    </location>
</feature>
<feature type="transmembrane region" description="Helical" evidence="1">
    <location>
        <begin position="66"/>
        <end position="86"/>
    </location>
</feature>
<gene>
    <name evidence="1" type="primary">nuoK2</name>
    <name type="ordered locus">aq_1378</name>
</gene>
<organism>
    <name type="scientific">Aquifex aeolicus (strain VF5)</name>
    <dbReference type="NCBI Taxonomy" id="224324"/>
    <lineage>
        <taxon>Bacteria</taxon>
        <taxon>Pseudomonadati</taxon>
        <taxon>Aquificota</taxon>
        <taxon>Aquificia</taxon>
        <taxon>Aquificales</taxon>
        <taxon>Aquificaceae</taxon>
        <taxon>Aquifex</taxon>
    </lineage>
</organism>
<evidence type="ECO:0000255" key="1">
    <source>
        <dbReference type="HAMAP-Rule" id="MF_01456"/>
    </source>
</evidence>
<sequence length="102" mass="10905">MKTIPLEAFLTVSMILFGLGLIGIIARRNLVTVLMSLELALNAVNIALVGADHYLGLAEGQIFALFIIALAATEAAVGLGIIIAIFRLKKVESTDEIRELRG</sequence>
<name>NUOK2_AQUAE</name>
<keyword id="KW-0997">Cell inner membrane</keyword>
<keyword id="KW-1003">Cell membrane</keyword>
<keyword id="KW-0472">Membrane</keyword>
<keyword id="KW-0520">NAD</keyword>
<keyword id="KW-0874">Quinone</keyword>
<keyword id="KW-1185">Reference proteome</keyword>
<keyword id="KW-1278">Translocase</keyword>
<keyword id="KW-0812">Transmembrane</keyword>
<keyword id="KW-1133">Transmembrane helix</keyword>
<keyword id="KW-0813">Transport</keyword>
<keyword id="KW-0830">Ubiquinone</keyword>